<dbReference type="EC" id="4.2.1.59" evidence="1"/>
<dbReference type="EC" id="5.3.3.14" evidence="1"/>
<dbReference type="EMBL" id="CU928145">
    <property type="protein sequence ID" value="CAU96865.1"/>
    <property type="molecule type" value="Genomic_DNA"/>
</dbReference>
<dbReference type="RefSeq" id="WP_001386684.1">
    <property type="nucleotide sequence ID" value="NC_011748.1"/>
</dbReference>
<dbReference type="SMR" id="B7LE54"/>
<dbReference type="KEGG" id="eck:EC55989_1003"/>
<dbReference type="HOGENOM" id="CLU_097925_0_0_6"/>
<dbReference type="UniPathway" id="UPA00094"/>
<dbReference type="Proteomes" id="UP000000746">
    <property type="component" value="Chromosome"/>
</dbReference>
<dbReference type="GO" id="GO:0005737">
    <property type="term" value="C:cytoplasm"/>
    <property type="evidence" value="ECO:0007669"/>
    <property type="project" value="UniProtKB-SubCell"/>
</dbReference>
<dbReference type="GO" id="GO:0019171">
    <property type="term" value="F:(3R)-hydroxyacyl-[acyl-carrier-protein] dehydratase activity"/>
    <property type="evidence" value="ECO:0007669"/>
    <property type="project" value="UniProtKB-UniRule"/>
</dbReference>
<dbReference type="GO" id="GO:0034017">
    <property type="term" value="F:trans-2-decenoyl-acyl-carrier-protein isomerase activity"/>
    <property type="evidence" value="ECO:0007669"/>
    <property type="project" value="UniProtKB-UniRule"/>
</dbReference>
<dbReference type="GO" id="GO:0006636">
    <property type="term" value="P:unsaturated fatty acid biosynthetic process"/>
    <property type="evidence" value="ECO:0007669"/>
    <property type="project" value="UniProtKB-UniRule"/>
</dbReference>
<dbReference type="CDD" id="cd01287">
    <property type="entry name" value="FabA"/>
    <property type="match status" value="1"/>
</dbReference>
<dbReference type="FunFam" id="3.10.129.10:FF:000003">
    <property type="entry name" value="3-hydroxydecanoyl-[acyl-carrier-protein] dehydratase"/>
    <property type="match status" value="1"/>
</dbReference>
<dbReference type="Gene3D" id="3.10.129.10">
    <property type="entry name" value="Hotdog Thioesterase"/>
    <property type="match status" value="1"/>
</dbReference>
<dbReference type="HAMAP" id="MF_00405">
    <property type="entry name" value="FabA"/>
    <property type="match status" value="1"/>
</dbReference>
<dbReference type="InterPro" id="IPR010083">
    <property type="entry name" value="FabA"/>
</dbReference>
<dbReference type="InterPro" id="IPR013114">
    <property type="entry name" value="FabA_FabZ"/>
</dbReference>
<dbReference type="InterPro" id="IPR029069">
    <property type="entry name" value="HotDog_dom_sf"/>
</dbReference>
<dbReference type="NCBIfam" id="TIGR01749">
    <property type="entry name" value="fabA"/>
    <property type="match status" value="1"/>
</dbReference>
<dbReference type="NCBIfam" id="NF003509">
    <property type="entry name" value="PRK05174.1"/>
    <property type="match status" value="1"/>
</dbReference>
<dbReference type="PANTHER" id="PTHR30272">
    <property type="entry name" value="3-HYDROXYACYL-[ACYL-CARRIER-PROTEIN] DEHYDRATASE"/>
    <property type="match status" value="1"/>
</dbReference>
<dbReference type="PANTHER" id="PTHR30272:SF8">
    <property type="entry name" value="3-HYDROXYDECANOYL-[ACYL-CARRIER-PROTEIN] DEHYDRATASE"/>
    <property type="match status" value="1"/>
</dbReference>
<dbReference type="Pfam" id="PF07977">
    <property type="entry name" value="FabA"/>
    <property type="match status" value="1"/>
</dbReference>
<dbReference type="SUPFAM" id="SSF54637">
    <property type="entry name" value="Thioesterase/thiol ester dehydrase-isomerase"/>
    <property type="match status" value="1"/>
</dbReference>
<keyword id="KW-0963">Cytoplasm</keyword>
<keyword id="KW-0275">Fatty acid biosynthesis</keyword>
<keyword id="KW-0276">Fatty acid metabolism</keyword>
<keyword id="KW-0413">Isomerase</keyword>
<keyword id="KW-0444">Lipid biosynthesis</keyword>
<keyword id="KW-0443">Lipid metabolism</keyword>
<keyword id="KW-0456">Lyase</keyword>
<keyword id="KW-1185">Reference proteome</keyword>
<name>FABA_ECO55</name>
<protein>
    <recommendedName>
        <fullName evidence="1">3-hydroxydecanoyl-[acyl-carrier-protein] dehydratase</fullName>
        <ecNumber evidence="1">4.2.1.59</ecNumber>
    </recommendedName>
    <alternativeName>
        <fullName evidence="1">3-hydroxyacyl-[acyl-carrier-protein] dehydratase FabA</fullName>
    </alternativeName>
    <alternativeName>
        <fullName evidence="1">Beta-hydroxydecanoyl thioester dehydrase</fullName>
    </alternativeName>
    <alternativeName>
        <fullName evidence="1">Trans-2-decenoyl-[acyl-carrier-protein] isomerase</fullName>
        <ecNumber evidence="1">5.3.3.14</ecNumber>
    </alternativeName>
</protein>
<organism>
    <name type="scientific">Escherichia coli (strain 55989 / EAEC)</name>
    <dbReference type="NCBI Taxonomy" id="585055"/>
    <lineage>
        <taxon>Bacteria</taxon>
        <taxon>Pseudomonadati</taxon>
        <taxon>Pseudomonadota</taxon>
        <taxon>Gammaproteobacteria</taxon>
        <taxon>Enterobacterales</taxon>
        <taxon>Enterobacteriaceae</taxon>
        <taxon>Escherichia</taxon>
    </lineage>
</organism>
<reference key="1">
    <citation type="journal article" date="2009" name="PLoS Genet.">
        <title>Organised genome dynamics in the Escherichia coli species results in highly diverse adaptive paths.</title>
        <authorList>
            <person name="Touchon M."/>
            <person name="Hoede C."/>
            <person name="Tenaillon O."/>
            <person name="Barbe V."/>
            <person name="Baeriswyl S."/>
            <person name="Bidet P."/>
            <person name="Bingen E."/>
            <person name="Bonacorsi S."/>
            <person name="Bouchier C."/>
            <person name="Bouvet O."/>
            <person name="Calteau A."/>
            <person name="Chiapello H."/>
            <person name="Clermont O."/>
            <person name="Cruveiller S."/>
            <person name="Danchin A."/>
            <person name="Diard M."/>
            <person name="Dossat C."/>
            <person name="Karoui M.E."/>
            <person name="Frapy E."/>
            <person name="Garry L."/>
            <person name="Ghigo J.M."/>
            <person name="Gilles A.M."/>
            <person name="Johnson J."/>
            <person name="Le Bouguenec C."/>
            <person name="Lescat M."/>
            <person name="Mangenot S."/>
            <person name="Martinez-Jehanne V."/>
            <person name="Matic I."/>
            <person name="Nassif X."/>
            <person name="Oztas S."/>
            <person name="Petit M.A."/>
            <person name="Pichon C."/>
            <person name="Rouy Z."/>
            <person name="Ruf C.S."/>
            <person name="Schneider D."/>
            <person name="Tourret J."/>
            <person name="Vacherie B."/>
            <person name="Vallenet D."/>
            <person name="Medigue C."/>
            <person name="Rocha E.P.C."/>
            <person name="Denamur E."/>
        </authorList>
    </citation>
    <scope>NUCLEOTIDE SEQUENCE [LARGE SCALE GENOMIC DNA]</scope>
    <source>
        <strain>55989 / EAEC</strain>
    </source>
</reference>
<evidence type="ECO:0000255" key="1">
    <source>
        <dbReference type="HAMAP-Rule" id="MF_00405"/>
    </source>
</evidence>
<sequence length="172" mass="18999">MVDKRESYTKEDLLASGRGELFGAKGPQLPAPNMLMMDRVVKMTETGGNFDKGYVEAELDINPDLWFFGCHFIGDPVMPGCLGLDAMWQLVGFYLGWLGSEGKGRALGVGEVKFTGQVLPTAKKVTYRIHFKRIVNRRLIMGLADGEVLVDGRLIYTASDLKVGLFQDTSAF</sequence>
<proteinExistence type="inferred from homology"/>
<feature type="chain" id="PRO_1000201177" description="3-hydroxydecanoyl-[acyl-carrier-protein] dehydratase">
    <location>
        <begin position="1"/>
        <end position="172"/>
    </location>
</feature>
<feature type="active site" evidence="1">
    <location>
        <position position="71"/>
    </location>
</feature>
<accession>B7LE54</accession>
<comment type="function">
    <text evidence="1">Necessary for the introduction of cis unsaturation into fatty acids. Catalyzes the dehydration of (3R)-3-hydroxydecanoyl-ACP to E-(2)-decenoyl-ACP and then its isomerization to Z-(3)-decenoyl-ACP. Can catalyze the dehydratase reaction for beta-hydroxyacyl-ACPs with saturated chain lengths up to 16:0, being most active on intermediate chain length.</text>
</comment>
<comment type="catalytic activity">
    <reaction evidence="1">
        <text>a (3R)-hydroxyacyl-[ACP] = a (2E)-enoyl-[ACP] + H2O</text>
        <dbReference type="Rhea" id="RHEA:13097"/>
        <dbReference type="Rhea" id="RHEA-COMP:9925"/>
        <dbReference type="Rhea" id="RHEA-COMP:9945"/>
        <dbReference type="ChEBI" id="CHEBI:15377"/>
        <dbReference type="ChEBI" id="CHEBI:78784"/>
        <dbReference type="ChEBI" id="CHEBI:78827"/>
        <dbReference type="EC" id="4.2.1.59"/>
    </reaction>
</comment>
<comment type="catalytic activity">
    <reaction evidence="1">
        <text>(3R)-hydroxydecanoyl-[ACP] = (2E)-decenoyl-[ACP] + H2O</text>
        <dbReference type="Rhea" id="RHEA:41860"/>
        <dbReference type="Rhea" id="RHEA-COMP:9638"/>
        <dbReference type="Rhea" id="RHEA-COMP:9639"/>
        <dbReference type="ChEBI" id="CHEBI:15377"/>
        <dbReference type="ChEBI" id="CHEBI:78466"/>
        <dbReference type="ChEBI" id="CHEBI:78467"/>
    </reaction>
</comment>
<comment type="catalytic activity">
    <reaction evidence="1">
        <text>(2E)-decenoyl-[ACP] = (3Z)-decenoyl-[ACP]</text>
        <dbReference type="Rhea" id="RHEA:23568"/>
        <dbReference type="Rhea" id="RHEA-COMP:9639"/>
        <dbReference type="Rhea" id="RHEA-COMP:9927"/>
        <dbReference type="ChEBI" id="CHEBI:78467"/>
        <dbReference type="ChEBI" id="CHEBI:78798"/>
        <dbReference type="EC" id="5.3.3.14"/>
    </reaction>
</comment>
<comment type="pathway">
    <text evidence="1">Lipid metabolism; fatty acid biosynthesis.</text>
</comment>
<comment type="subunit">
    <text evidence="1">Homodimer.</text>
</comment>
<comment type="subcellular location">
    <subcellularLocation>
        <location evidence="1">Cytoplasm</location>
    </subcellularLocation>
</comment>
<comment type="similarity">
    <text evidence="1">Belongs to the thioester dehydratase family. FabA subfamily.</text>
</comment>
<gene>
    <name evidence="1" type="primary">fabA</name>
    <name type="ordered locus">EC55989_1003</name>
</gene>